<comment type="function">
    <text evidence="1">Component of the MICOS complex, a large protein complex of the mitochondrial inner membrane that plays crucial roles in the maintenance of crista junctions, inner membrane architecture, and formation of contact sites to the outer membrane. Plays a role in keeping cristae membranes connected to the inner boundary membrane. Also promotes protein import via the mitochondrial intermembrane space assembly (MIA) pathway (By similarity).</text>
</comment>
<comment type="subunit">
    <text evidence="1">Component of the mitochondrial contact site and cristae organizing system (MICOS) complex.</text>
</comment>
<comment type="subcellular location">
    <subcellularLocation>
        <location evidence="1">Mitochondrion inner membrane</location>
        <topology evidence="1">Single-pass membrane protein</topology>
    </subcellularLocation>
</comment>
<comment type="similarity">
    <text evidence="4">Belongs to the MICOS complex subunit Mic60 family.</text>
</comment>
<sequence>MLRYSVLSSQTRLLSASRQRTATQLLANPIASNRIITGQRYFADHKNVPPTSPTPVSPESQSVIPPQTVNPVTATPTAQVQTSPPSSIQPPKPPVETPSSSPIPPPTPKKTGRFRRFLLYLILTSGIAYGGGVFLALKSDNFHDFFTEYVPYGEESVLYFEERDFYRRFPNATRHSNRLPPIHKEQSQRVTIPSKSGLSWKVSEEESDSASLTQKGPHNSAVDASKDASAVKTVIKAKEESAEKKAPVKKEAAPPAPKEEPRTPAIATPATLELIKVEGADEPVVQELVRIFNDIITVIGADEGAATKYAAPVSRVRTEVETIGQKISSLRADAEKAAKEEVEKAHALFDESAKKLMQQIEQARAAEAAQFREEFEAEREKLVRAYQEKIQTELSRAQELAEQRLKNELVEQAIELNRKYLNDVKELVERERDGRLSKISELTANVNQLEKLTTDWSDVIESNLKTQQLQVAVDAVRSVLEGATSAKPFIRELVAVKELAADDPVVAAAIASINPTAYQRGIPTSSQLIERFRRVAGEVRKASLLPEDAGIASHAASFVLSKVMFKRDAVTDGDDVESVLVRTENLLEEGNLDAAAREMNTLQGWAKILSKDWLADVRRVLEVKQAVELMETEARLQCLRVES</sequence>
<name>MIC60_TALMQ</name>
<accession>B6QHK6</accession>
<protein>
    <recommendedName>
        <fullName>MICOS complex subunit mic60</fullName>
    </recommendedName>
    <alternativeName>
        <fullName>Mitofilin</fullName>
    </alternativeName>
</protein>
<keyword id="KW-0175">Coiled coil</keyword>
<keyword id="KW-0472">Membrane</keyword>
<keyword id="KW-0496">Mitochondrion</keyword>
<keyword id="KW-0999">Mitochondrion inner membrane</keyword>
<keyword id="KW-1185">Reference proteome</keyword>
<keyword id="KW-0809">Transit peptide</keyword>
<keyword id="KW-0812">Transmembrane</keyword>
<keyword id="KW-1133">Transmembrane helix</keyword>
<proteinExistence type="inferred from homology"/>
<evidence type="ECO:0000250" key="1"/>
<evidence type="ECO:0000255" key="2"/>
<evidence type="ECO:0000256" key="3">
    <source>
        <dbReference type="SAM" id="MobiDB-lite"/>
    </source>
</evidence>
<evidence type="ECO:0000305" key="4"/>
<feature type="transit peptide" description="Mitochondrion" evidence="2">
    <location>
        <begin position="1"/>
        <end position="42"/>
    </location>
</feature>
<feature type="chain" id="PRO_0000406667" description="MICOS complex subunit mic60">
    <location>
        <begin position="43"/>
        <end position="643"/>
    </location>
</feature>
<feature type="topological domain" description="Mitochondrial matrix" evidence="2">
    <location>
        <begin position="43"/>
        <end position="116"/>
    </location>
</feature>
<feature type="transmembrane region" description="Helical" evidence="2">
    <location>
        <begin position="117"/>
        <end position="137"/>
    </location>
</feature>
<feature type="topological domain" description="Mitochondrial intermembrane" evidence="2">
    <location>
        <begin position="138"/>
        <end position="643"/>
    </location>
</feature>
<feature type="region of interest" description="Disordered" evidence="3">
    <location>
        <begin position="44"/>
        <end position="110"/>
    </location>
</feature>
<feature type="region of interest" description="Disordered" evidence="3">
    <location>
        <begin position="173"/>
        <end position="263"/>
    </location>
</feature>
<feature type="coiled-coil region" evidence="2">
    <location>
        <begin position="317"/>
        <end position="451"/>
    </location>
</feature>
<feature type="compositionally biased region" description="Polar residues" evidence="3">
    <location>
        <begin position="59"/>
        <end position="82"/>
    </location>
</feature>
<feature type="compositionally biased region" description="Pro residues" evidence="3">
    <location>
        <begin position="87"/>
        <end position="108"/>
    </location>
</feature>
<feature type="compositionally biased region" description="Polar residues" evidence="3">
    <location>
        <begin position="188"/>
        <end position="197"/>
    </location>
</feature>
<feature type="compositionally biased region" description="Low complexity" evidence="3">
    <location>
        <begin position="220"/>
        <end position="232"/>
    </location>
</feature>
<feature type="compositionally biased region" description="Basic and acidic residues" evidence="3">
    <location>
        <begin position="236"/>
        <end position="262"/>
    </location>
</feature>
<organism>
    <name type="scientific">Talaromyces marneffei (strain ATCC 18224 / CBS 334.59 / QM 7333)</name>
    <name type="common">Penicillium marneffei</name>
    <dbReference type="NCBI Taxonomy" id="441960"/>
    <lineage>
        <taxon>Eukaryota</taxon>
        <taxon>Fungi</taxon>
        <taxon>Dikarya</taxon>
        <taxon>Ascomycota</taxon>
        <taxon>Pezizomycotina</taxon>
        <taxon>Eurotiomycetes</taxon>
        <taxon>Eurotiomycetidae</taxon>
        <taxon>Eurotiales</taxon>
        <taxon>Trichocomaceae</taxon>
        <taxon>Talaromyces</taxon>
        <taxon>Talaromyces sect. Talaromyces</taxon>
    </lineage>
</organism>
<dbReference type="EMBL" id="DS995902">
    <property type="protein sequence ID" value="EEA22851.1"/>
    <property type="molecule type" value="Genomic_DNA"/>
</dbReference>
<dbReference type="RefSeq" id="XP_002149018.1">
    <property type="nucleotide sequence ID" value="XM_002148982.1"/>
</dbReference>
<dbReference type="SMR" id="B6QHK6"/>
<dbReference type="STRING" id="441960.B6QHK6"/>
<dbReference type="VEuPathDB" id="FungiDB:PMAA_094570"/>
<dbReference type="HOGENOM" id="CLU_008024_1_2_1"/>
<dbReference type="OrthoDB" id="12889at28568"/>
<dbReference type="PhylomeDB" id="B6QHK6"/>
<dbReference type="Proteomes" id="UP000001294">
    <property type="component" value="Unassembled WGS sequence"/>
</dbReference>
<dbReference type="GO" id="GO:0061617">
    <property type="term" value="C:MICOS complex"/>
    <property type="evidence" value="ECO:0007669"/>
    <property type="project" value="TreeGrafter"/>
</dbReference>
<dbReference type="GO" id="GO:0042407">
    <property type="term" value="P:cristae formation"/>
    <property type="evidence" value="ECO:0007669"/>
    <property type="project" value="TreeGrafter"/>
</dbReference>
<dbReference type="InterPro" id="IPR019133">
    <property type="entry name" value="MIC60"/>
</dbReference>
<dbReference type="PANTHER" id="PTHR15415:SF7">
    <property type="entry name" value="MICOS COMPLEX SUBUNIT MIC60"/>
    <property type="match status" value="1"/>
</dbReference>
<dbReference type="PANTHER" id="PTHR15415">
    <property type="entry name" value="MITOFILIN"/>
    <property type="match status" value="1"/>
</dbReference>
<dbReference type="Pfam" id="PF09731">
    <property type="entry name" value="Mitofilin"/>
    <property type="match status" value="2"/>
</dbReference>
<reference key="1">
    <citation type="journal article" date="2015" name="Genome Announc.">
        <title>Genome sequence of the AIDS-associated pathogen Penicillium marneffei (ATCC18224) and its near taxonomic relative Talaromyces stipitatus (ATCC10500).</title>
        <authorList>
            <person name="Nierman W.C."/>
            <person name="Fedorova-Abrams N.D."/>
            <person name="Andrianopoulos A."/>
        </authorList>
    </citation>
    <scope>NUCLEOTIDE SEQUENCE [LARGE SCALE GENOMIC DNA]</scope>
    <source>
        <strain>ATCC 18224 / CBS 334.59 / QM 7333</strain>
    </source>
</reference>
<gene>
    <name type="primary">mic60</name>
    <name type="ORF">PMAA_094570</name>
</gene>